<organism>
    <name type="scientific">Bacillus cereus (strain ZK / E33L)</name>
    <dbReference type="NCBI Taxonomy" id="288681"/>
    <lineage>
        <taxon>Bacteria</taxon>
        <taxon>Bacillati</taxon>
        <taxon>Bacillota</taxon>
        <taxon>Bacilli</taxon>
        <taxon>Bacillales</taxon>
        <taxon>Bacillaceae</taxon>
        <taxon>Bacillus</taxon>
        <taxon>Bacillus cereus group</taxon>
    </lineage>
</organism>
<keyword id="KW-0963">Cytoplasm</keyword>
<keyword id="KW-0255">Endonuclease</keyword>
<keyword id="KW-0378">Hydrolase</keyword>
<keyword id="KW-0460">Magnesium</keyword>
<keyword id="KW-0479">Metal-binding</keyword>
<keyword id="KW-0540">Nuclease</keyword>
<evidence type="ECO:0000255" key="1">
    <source>
        <dbReference type="HAMAP-Rule" id="MF_00053"/>
    </source>
</evidence>
<evidence type="ECO:0000255" key="2">
    <source>
        <dbReference type="PROSITE-ProRule" id="PRU01319"/>
    </source>
</evidence>
<gene>
    <name evidence="1" type="primary">rnhC</name>
    <name type="ordered locus">BCE33L4300</name>
</gene>
<sequence length="311" mass="34197">MSNSIVIQTNSTVIEDMKQQYKHSLSPKTPQGGIFMAKVPSCTITAYKSGKVMFQGGRAEAEAARWQTGSQTPKTAVKKAVDSHRYTPPASIGTMSIVGSDEVGTGDFFGPMTVVAVYVDAKQIPLLKELGVKDSKNLNDEQITAIAKQLLHVVPYSSLVLHNEKYNELFDKGNNQGKLKALLHNKAITNLLAKLAPTKPEGVLIDQFTQPDTYYKYLAKQKQVQRENVYFATKGESVHLAVAAASILARYSFVKQFNELSKKAGMPLPKGAGKQVDIAAAKLIQKLGKERLPEFVKLHFANTEKAFRLLK</sequence>
<feature type="chain" id="PRO_1000031226" description="Ribonuclease HIII">
    <location>
        <begin position="1"/>
        <end position="311"/>
    </location>
</feature>
<feature type="domain" description="RNase H type-2" evidence="2">
    <location>
        <begin position="95"/>
        <end position="311"/>
    </location>
</feature>
<feature type="binding site" evidence="1">
    <location>
        <position position="101"/>
    </location>
    <ligand>
        <name>a divalent metal cation</name>
        <dbReference type="ChEBI" id="CHEBI:60240"/>
    </ligand>
</feature>
<feature type="binding site" evidence="1">
    <location>
        <position position="102"/>
    </location>
    <ligand>
        <name>a divalent metal cation</name>
        <dbReference type="ChEBI" id="CHEBI:60240"/>
    </ligand>
</feature>
<feature type="binding site" evidence="1">
    <location>
        <position position="206"/>
    </location>
    <ligand>
        <name>a divalent metal cation</name>
        <dbReference type="ChEBI" id="CHEBI:60240"/>
    </ligand>
</feature>
<comment type="function">
    <text evidence="1">Endonuclease that specifically degrades the RNA of RNA-DNA hybrids.</text>
</comment>
<comment type="catalytic activity">
    <reaction evidence="1">
        <text>Endonucleolytic cleavage to 5'-phosphomonoester.</text>
        <dbReference type="EC" id="3.1.26.4"/>
    </reaction>
</comment>
<comment type="cofactor">
    <cofactor evidence="1">
        <name>Mn(2+)</name>
        <dbReference type="ChEBI" id="CHEBI:29035"/>
    </cofactor>
    <cofactor evidence="1">
        <name>Mg(2+)</name>
        <dbReference type="ChEBI" id="CHEBI:18420"/>
    </cofactor>
    <text evidence="1">Manganese or magnesium. Binds 1 divalent metal ion per monomer in the absence of substrate. May bind a second metal ion after substrate binding.</text>
</comment>
<comment type="subcellular location">
    <subcellularLocation>
        <location evidence="1">Cytoplasm</location>
    </subcellularLocation>
</comment>
<comment type="similarity">
    <text evidence="1">Belongs to the RNase HII family. RnhC subfamily.</text>
</comment>
<dbReference type="EC" id="3.1.26.4" evidence="1"/>
<dbReference type="EMBL" id="CP000001">
    <property type="protein sequence ID" value="AAU15969.1"/>
    <property type="molecule type" value="Genomic_DNA"/>
</dbReference>
<dbReference type="RefSeq" id="WP_000071575.1">
    <property type="nucleotide sequence ID" value="NC_006274.1"/>
</dbReference>
<dbReference type="SMR" id="Q633N8"/>
<dbReference type="KEGG" id="bcz:BCE33L4300"/>
<dbReference type="PATRIC" id="fig|288681.22.peg.1076"/>
<dbReference type="Proteomes" id="UP000002612">
    <property type="component" value="Chromosome"/>
</dbReference>
<dbReference type="GO" id="GO:0005737">
    <property type="term" value="C:cytoplasm"/>
    <property type="evidence" value="ECO:0007669"/>
    <property type="project" value="UniProtKB-SubCell"/>
</dbReference>
<dbReference type="GO" id="GO:0032299">
    <property type="term" value="C:ribonuclease H2 complex"/>
    <property type="evidence" value="ECO:0007669"/>
    <property type="project" value="TreeGrafter"/>
</dbReference>
<dbReference type="GO" id="GO:0000287">
    <property type="term" value="F:magnesium ion binding"/>
    <property type="evidence" value="ECO:0007669"/>
    <property type="project" value="UniProtKB-UniRule"/>
</dbReference>
<dbReference type="GO" id="GO:0003723">
    <property type="term" value="F:RNA binding"/>
    <property type="evidence" value="ECO:0007669"/>
    <property type="project" value="InterPro"/>
</dbReference>
<dbReference type="GO" id="GO:0004523">
    <property type="term" value="F:RNA-DNA hybrid ribonuclease activity"/>
    <property type="evidence" value="ECO:0007669"/>
    <property type="project" value="UniProtKB-UniRule"/>
</dbReference>
<dbReference type="GO" id="GO:0043137">
    <property type="term" value="P:DNA replication, removal of RNA primer"/>
    <property type="evidence" value="ECO:0007669"/>
    <property type="project" value="TreeGrafter"/>
</dbReference>
<dbReference type="GO" id="GO:0006298">
    <property type="term" value="P:mismatch repair"/>
    <property type="evidence" value="ECO:0007669"/>
    <property type="project" value="TreeGrafter"/>
</dbReference>
<dbReference type="CDD" id="cd06590">
    <property type="entry name" value="RNase_HII_bacteria_HIII_like"/>
    <property type="match status" value="1"/>
</dbReference>
<dbReference type="CDD" id="cd14796">
    <property type="entry name" value="RNAse_HIII_N"/>
    <property type="match status" value="1"/>
</dbReference>
<dbReference type="FunFam" id="3.30.310.10:FF:000016">
    <property type="entry name" value="Ribonuclease HIII"/>
    <property type="match status" value="1"/>
</dbReference>
<dbReference type="FunFam" id="3.30.420.10:FF:000047">
    <property type="entry name" value="Ribonuclease HIII"/>
    <property type="match status" value="1"/>
</dbReference>
<dbReference type="Gene3D" id="3.30.420.10">
    <property type="entry name" value="Ribonuclease H-like superfamily/Ribonuclease H"/>
    <property type="match status" value="1"/>
</dbReference>
<dbReference type="Gene3D" id="3.30.310.10">
    <property type="entry name" value="TATA-Binding Protein"/>
    <property type="match status" value="1"/>
</dbReference>
<dbReference type="HAMAP" id="MF_00053">
    <property type="entry name" value="RNase_HIII"/>
    <property type="match status" value="1"/>
</dbReference>
<dbReference type="InterPro" id="IPR001352">
    <property type="entry name" value="RNase_HII/HIII"/>
</dbReference>
<dbReference type="InterPro" id="IPR024567">
    <property type="entry name" value="RNase_HII/HIII_dom"/>
</dbReference>
<dbReference type="InterPro" id="IPR004641">
    <property type="entry name" value="RNase_HIII"/>
</dbReference>
<dbReference type="InterPro" id="IPR024568">
    <property type="entry name" value="RNase_HIII_N"/>
</dbReference>
<dbReference type="InterPro" id="IPR012337">
    <property type="entry name" value="RNaseH-like_sf"/>
</dbReference>
<dbReference type="InterPro" id="IPR036397">
    <property type="entry name" value="RNaseH_sf"/>
</dbReference>
<dbReference type="InterPro" id="IPR012295">
    <property type="entry name" value="TBP_dom_sf"/>
</dbReference>
<dbReference type="NCBIfam" id="TIGR00716">
    <property type="entry name" value="rnhC"/>
    <property type="match status" value="1"/>
</dbReference>
<dbReference type="PANTHER" id="PTHR10954:SF23">
    <property type="entry name" value="RIBONUCLEASE"/>
    <property type="match status" value="1"/>
</dbReference>
<dbReference type="PANTHER" id="PTHR10954">
    <property type="entry name" value="RIBONUCLEASE H2 SUBUNIT A"/>
    <property type="match status" value="1"/>
</dbReference>
<dbReference type="Pfam" id="PF11858">
    <property type="entry name" value="DUF3378"/>
    <property type="match status" value="1"/>
</dbReference>
<dbReference type="Pfam" id="PF01351">
    <property type="entry name" value="RNase_HII"/>
    <property type="match status" value="1"/>
</dbReference>
<dbReference type="PIRSF" id="PIRSF037748">
    <property type="entry name" value="RnhC"/>
    <property type="match status" value="1"/>
</dbReference>
<dbReference type="SUPFAM" id="SSF53098">
    <property type="entry name" value="Ribonuclease H-like"/>
    <property type="match status" value="1"/>
</dbReference>
<dbReference type="PROSITE" id="PS51975">
    <property type="entry name" value="RNASE_H_2"/>
    <property type="match status" value="1"/>
</dbReference>
<reference key="1">
    <citation type="journal article" date="2006" name="J. Bacteriol.">
        <title>Pathogenomic sequence analysis of Bacillus cereus and Bacillus thuringiensis isolates closely related to Bacillus anthracis.</title>
        <authorList>
            <person name="Han C.S."/>
            <person name="Xie G."/>
            <person name="Challacombe J.F."/>
            <person name="Altherr M.R."/>
            <person name="Bhotika S.S."/>
            <person name="Bruce D."/>
            <person name="Campbell C.S."/>
            <person name="Campbell M.L."/>
            <person name="Chen J."/>
            <person name="Chertkov O."/>
            <person name="Cleland C."/>
            <person name="Dimitrijevic M."/>
            <person name="Doggett N.A."/>
            <person name="Fawcett J.J."/>
            <person name="Glavina T."/>
            <person name="Goodwin L.A."/>
            <person name="Hill K.K."/>
            <person name="Hitchcock P."/>
            <person name="Jackson P.J."/>
            <person name="Keim P."/>
            <person name="Kewalramani A.R."/>
            <person name="Longmire J."/>
            <person name="Lucas S."/>
            <person name="Malfatti S."/>
            <person name="McMurry K."/>
            <person name="Meincke L.J."/>
            <person name="Misra M."/>
            <person name="Moseman B.L."/>
            <person name="Mundt M."/>
            <person name="Munk A.C."/>
            <person name="Okinaka R.T."/>
            <person name="Parson-Quintana B."/>
            <person name="Reilly L.P."/>
            <person name="Richardson P."/>
            <person name="Robinson D.L."/>
            <person name="Rubin E."/>
            <person name="Saunders E."/>
            <person name="Tapia R."/>
            <person name="Tesmer J.G."/>
            <person name="Thayer N."/>
            <person name="Thompson L.S."/>
            <person name="Tice H."/>
            <person name="Ticknor L.O."/>
            <person name="Wills P.L."/>
            <person name="Brettin T.S."/>
            <person name="Gilna P."/>
        </authorList>
    </citation>
    <scope>NUCLEOTIDE SEQUENCE [LARGE SCALE GENOMIC DNA]</scope>
    <source>
        <strain>ZK / E33L</strain>
    </source>
</reference>
<protein>
    <recommendedName>
        <fullName evidence="1">Ribonuclease HIII</fullName>
        <shortName evidence="1">RNase HIII</shortName>
        <ecNumber evidence="1">3.1.26.4</ecNumber>
    </recommendedName>
</protein>
<proteinExistence type="inferred from homology"/>
<name>RNH3_BACCZ</name>
<accession>Q633N8</accession>